<sequence length="1232" mass="138896">MVHPVQVGKRTRMSFSRLKEVGQMPNLIEVQLDSYDWFLKEGLQEVFDDINPIQDYTGNLNLEFVGYKLDLDSIKYSVEECKERDSTYAAPLKVKVRLLNKETGEIKEQEVFMGDFPLMTEQGTFIINGAERVIVSQLVRSPGVYYDMTVDKTGSKLFSATVIPNRGAWLEYETDSNNIIYVRIDKTRKLPITILARALGYGTDAEIIEFFGEDERLKATIEKDNTKTREEALLEIYKRLRPGEPPTVDSAESLIESLFFDAKRYDLSRVGRYKFNKKLAIHLRITNQIADQDIVNPQTGEILVQKGEKIDKDKAIEIQSCGINEVYIKIDDKSFKVIGNHFVDIHSLVSFDISDLNIKEYVFYPVLKEILDNYADEESIKEEIRKNIYRLIPKHIIREDIYATINYELALSYDIGYKDDIDHLGNRRLRSVGELLQNQFRIGLSRMERVVKERMTIQDQEVITPQALINIRPVAASIKEFFGSSQLSQFMDQTNPLSELTHKRRLSALGPGGLSRERAGFEVRDVHHSHYGRMCPIETPEGPNIGLINSLATFAKVNEYGFIETPYRRIDPKNKRATNDIVYMTADEEDLYVIARSDEPIDENGYFIDDKVTVRAKEEVLVVPVSEVEYMDISPRQLVSVATAMIPFLENDDASRALMGSNMQRQAVPLLKPQAPIVGTGIEYKAATDSGVLPKAKNAGTVVYVSADEIRVRRDSDGGIDKYKLLKFKRSNQGTCINQRPIVSKGEVVAKETLLADGPSTDLGEIALGKNILMGFITWEGYNYEDAMLISEQLVKEDVFTSIHIEEYEAEARDTKLGPEEITRDIPNVGEEALKDIDERGIIRIGAEVRSGDILVGKVTPKGETELTAEERLLRAIFGEKAREVRDTSLRVPHGEAGIIVDVKIFTRENGDELPPGVNKLVRCYIAQKRKISVGDKMAGRHGNKGVISRVLPEEDMPFLPDGRPLQICLNPLGVPSRMNIGQVLEVHLGLAASKLGWHIATPVFDGAIESDIVDCLRKAGYSEDGKTVLYDGRTGEPFDNRVTVGYMYILKLAHLVDDKIHARSTGPYSLVTQQPLGGKAQFGGQRFGEMEVWALEAYGAAHTLQEILTVKSDDVVGRVKTYEAIVKGENIPEPGVPESFKVLIKELQALCLDVKVLNDDNQEIKLKESVDEDADELEVNIEGTENQPEEKEEKEKEDSDEYDDLREEDVEPDLEELSLDDLDLDDFGDEH</sequence>
<reference key="1">
    <citation type="journal article" date="2007" name="PLoS ONE">
        <title>Analysis of the neurotoxin complex genes in Clostridium botulinum A1-A4 and B1 strains: BoNT/A3, /Ba4 and /B1 clusters are located within plasmids.</title>
        <authorList>
            <person name="Smith T.J."/>
            <person name="Hill K.K."/>
            <person name="Foley B.T."/>
            <person name="Detter J.C."/>
            <person name="Munk A.C."/>
            <person name="Bruce D.C."/>
            <person name="Doggett N.A."/>
            <person name="Smith L.A."/>
            <person name="Marks J.D."/>
            <person name="Xie G."/>
            <person name="Brettin T.S."/>
        </authorList>
    </citation>
    <scope>NUCLEOTIDE SEQUENCE [LARGE SCALE GENOMIC DNA]</scope>
    <source>
        <strain>Okra / Type B1</strain>
    </source>
</reference>
<protein>
    <recommendedName>
        <fullName evidence="1">DNA-directed RNA polymerase subunit beta</fullName>
        <shortName evidence="1">RNAP subunit beta</shortName>
        <ecNumber evidence="1">2.7.7.6</ecNumber>
    </recommendedName>
    <alternativeName>
        <fullName evidence="1">RNA polymerase subunit beta</fullName>
    </alternativeName>
    <alternativeName>
        <fullName evidence="1">Transcriptase subunit beta</fullName>
    </alternativeName>
</protein>
<organism>
    <name type="scientific">Clostridium botulinum (strain Okra / Type B1)</name>
    <dbReference type="NCBI Taxonomy" id="498213"/>
    <lineage>
        <taxon>Bacteria</taxon>
        <taxon>Bacillati</taxon>
        <taxon>Bacillota</taxon>
        <taxon>Clostridia</taxon>
        <taxon>Eubacteriales</taxon>
        <taxon>Clostridiaceae</taxon>
        <taxon>Clostridium</taxon>
    </lineage>
</organism>
<proteinExistence type="inferred from homology"/>
<accession>B1IGG2</accession>
<gene>
    <name evidence="1" type="primary">rpoB</name>
    <name type="ordered locus">CLD_1016</name>
</gene>
<keyword id="KW-0240">DNA-directed RNA polymerase</keyword>
<keyword id="KW-0548">Nucleotidyltransferase</keyword>
<keyword id="KW-0804">Transcription</keyword>
<keyword id="KW-0808">Transferase</keyword>
<name>RPOB_CLOBK</name>
<comment type="function">
    <text evidence="1">DNA-dependent RNA polymerase catalyzes the transcription of DNA into RNA using the four ribonucleoside triphosphates as substrates.</text>
</comment>
<comment type="catalytic activity">
    <reaction evidence="1">
        <text>RNA(n) + a ribonucleoside 5'-triphosphate = RNA(n+1) + diphosphate</text>
        <dbReference type="Rhea" id="RHEA:21248"/>
        <dbReference type="Rhea" id="RHEA-COMP:14527"/>
        <dbReference type="Rhea" id="RHEA-COMP:17342"/>
        <dbReference type="ChEBI" id="CHEBI:33019"/>
        <dbReference type="ChEBI" id="CHEBI:61557"/>
        <dbReference type="ChEBI" id="CHEBI:140395"/>
        <dbReference type="EC" id="2.7.7.6"/>
    </reaction>
</comment>
<comment type="subunit">
    <text evidence="1">The RNAP catalytic core consists of 2 alpha, 1 beta, 1 beta' and 1 omega subunit. When a sigma factor is associated with the core the holoenzyme is formed, which can initiate transcription.</text>
</comment>
<comment type="similarity">
    <text evidence="1">Belongs to the RNA polymerase beta chain family.</text>
</comment>
<evidence type="ECO:0000255" key="1">
    <source>
        <dbReference type="HAMAP-Rule" id="MF_01321"/>
    </source>
</evidence>
<evidence type="ECO:0000256" key="2">
    <source>
        <dbReference type="SAM" id="MobiDB-lite"/>
    </source>
</evidence>
<feature type="chain" id="PRO_1000141679" description="DNA-directed RNA polymerase subunit beta">
    <location>
        <begin position="1"/>
        <end position="1232"/>
    </location>
</feature>
<feature type="region of interest" description="Disordered" evidence="2">
    <location>
        <begin position="1170"/>
        <end position="1232"/>
    </location>
</feature>
<feature type="compositionally biased region" description="Acidic residues" evidence="2">
    <location>
        <begin position="1171"/>
        <end position="1180"/>
    </location>
</feature>
<feature type="compositionally biased region" description="Basic and acidic residues" evidence="2">
    <location>
        <begin position="1189"/>
        <end position="1198"/>
    </location>
</feature>
<feature type="compositionally biased region" description="Acidic residues" evidence="2">
    <location>
        <begin position="1199"/>
        <end position="1232"/>
    </location>
</feature>
<dbReference type="EC" id="2.7.7.6" evidence="1"/>
<dbReference type="EMBL" id="CP000939">
    <property type="protein sequence ID" value="ACA46323.1"/>
    <property type="molecule type" value="Genomic_DNA"/>
</dbReference>
<dbReference type="RefSeq" id="WP_003402988.1">
    <property type="nucleotide sequence ID" value="NC_010516.1"/>
</dbReference>
<dbReference type="SMR" id="B1IGG2"/>
<dbReference type="KEGG" id="cbb:CLD_1016"/>
<dbReference type="HOGENOM" id="CLU_000524_4_1_9"/>
<dbReference type="Proteomes" id="UP000008541">
    <property type="component" value="Chromosome"/>
</dbReference>
<dbReference type="GO" id="GO:0000428">
    <property type="term" value="C:DNA-directed RNA polymerase complex"/>
    <property type="evidence" value="ECO:0007669"/>
    <property type="project" value="UniProtKB-KW"/>
</dbReference>
<dbReference type="GO" id="GO:0003677">
    <property type="term" value="F:DNA binding"/>
    <property type="evidence" value="ECO:0007669"/>
    <property type="project" value="UniProtKB-UniRule"/>
</dbReference>
<dbReference type="GO" id="GO:0003899">
    <property type="term" value="F:DNA-directed RNA polymerase activity"/>
    <property type="evidence" value="ECO:0007669"/>
    <property type="project" value="UniProtKB-UniRule"/>
</dbReference>
<dbReference type="GO" id="GO:0032549">
    <property type="term" value="F:ribonucleoside binding"/>
    <property type="evidence" value="ECO:0007669"/>
    <property type="project" value="InterPro"/>
</dbReference>
<dbReference type="GO" id="GO:0006351">
    <property type="term" value="P:DNA-templated transcription"/>
    <property type="evidence" value="ECO:0007669"/>
    <property type="project" value="UniProtKB-UniRule"/>
</dbReference>
<dbReference type="CDD" id="cd00653">
    <property type="entry name" value="RNA_pol_B_RPB2"/>
    <property type="match status" value="1"/>
</dbReference>
<dbReference type="FunFam" id="3.90.1800.10:FF:000001">
    <property type="entry name" value="DNA-directed RNA polymerase subunit beta"/>
    <property type="match status" value="1"/>
</dbReference>
<dbReference type="Gene3D" id="2.40.50.100">
    <property type="match status" value="1"/>
</dbReference>
<dbReference type="Gene3D" id="2.40.50.150">
    <property type="match status" value="1"/>
</dbReference>
<dbReference type="Gene3D" id="3.90.1100.10">
    <property type="match status" value="2"/>
</dbReference>
<dbReference type="Gene3D" id="2.30.150.10">
    <property type="entry name" value="DNA-directed RNA polymerase, beta subunit, external 1 domain"/>
    <property type="match status" value="1"/>
</dbReference>
<dbReference type="Gene3D" id="2.40.270.10">
    <property type="entry name" value="DNA-directed RNA polymerase, subunit 2, domain 6"/>
    <property type="match status" value="2"/>
</dbReference>
<dbReference type="Gene3D" id="3.90.1800.10">
    <property type="entry name" value="RNA polymerase alpha subunit dimerisation domain"/>
    <property type="match status" value="1"/>
</dbReference>
<dbReference type="Gene3D" id="3.90.1110.10">
    <property type="entry name" value="RNA polymerase Rpb2, domain 2"/>
    <property type="match status" value="2"/>
</dbReference>
<dbReference type="HAMAP" id="MF_01321">
    <property type="entry name" value="RNApol_bact_RpoB"/>
    <property type="match status" value="1"/>
</dbReference>
<dbReference type="InterPro" id="IPR042107">
    <property type="entry name" value="DNA-dir_RNA_pol_bsu_ext_1_sf"/>
</dbReference>
<dbReference type="InterPro" id="IPR019462">
    <property type="entry name" value="DNA-dir_RNA_pol_bsu_external_1"/>
</dbReference>
<dbReference type="InterPro" id="IPR015712">
    <property type="entry name" value="DNA-dir_RNA_pol_su2"/>
</dbReference>
<dbReference type="InterPro" id="IPR007120">
    <property type="entry name" value="DNA-dir_RNAP_su2_dom"/>
</dbReference>
<dbReference type="InterPro" id="IPR037033">
    <property type="entry name" value="DNA-dir_RNAP_su2_hyb_sf"/>
</dbReference>
<dbReference type="InterPro" id="IPR010243">
    <property type="entry name" value="RNA_pol_bsu_bac"/>
</dbReference>
<dbReference type="InterPro" id="IPR007121">
    <property type="entry name" value="RNA_pol_bsu_CS"/>
</dbReference>
<dbReference type="InterPro" id="IPR007644">
    <property type="entry name" value="RNA_pol_bsu_protrusion"/>
</dbReference>
<dbReference type="InterPro" id="IPR007642">
    <property type="entry name" value="RNA_pol_Rpb2_2"/>
</dbReference>
<dbReference type="InterPro" id="IPR037034">
    <property type="entry name" value="RNA_pol_Rpb2_2_sf"/>
</dbReference>
<dbReference type="InterPro" id="IPR007645">
    <property type="entry name" value="RNA_pol_Rpb2_3"/>
</dbReference>
<dbReference type="InterPro" id="IPR007641">
    <property type="entry name" value="RNA_pol_Rpb2_7"/>
</dbReference>
<dbReference type="InterPro" id="IPR014724">
    <property type="entry name" value="RNA_pol_RPB2_OB-fold"/>
</dbReference>
<dbReference type="NCBIfam" id="NF001616">
    <property type="entry name" value="PRK00405.1"/>
    <property type="match status" value="1"/>
</dbReference>
<dbReference type="NCBIfam" id="TIGR02013">
    <property type="entry name" value="rpoB"/>
    <property type="match status" value="1"/>
</dbReference>
<dbReference type="PANTHER" id="PTHR20856">
    <property type="entry name" value="DNA-DIRECTED RNA POLYMERASE I SUBUNIT 2"/>
    <property type="match status" value="1"/>
</dbReference>
<dbReference type="Pfam" id="PF04563">
    <property type="entry name" value="RNA_pol_Rpb2_1"/>
    <property type="match status" value="1"/>
</dbReference>
<dbReference type="Pfam" id="PF04561">
    <property type="entry name" value="RNA_pol_Rpb2_2"/>
    <property type="match status" value="2"/>
</dbReference>
<dbReference type="Pfam" id="PF04565">
    <property type="entry name" value="RNA_pol_Rpb2_3"/>
    <property type="match status" value="1"/>
</dbReference>
<dbReference type="Pfam" id="PF10385">
    <property type="entry name" value="RNA_pol_Rpb2_45"/>
    <property type="match status" value="1"/>
</dbReference>
<dbReference type="Pfam" id="PF00562">
    <property type="entry name" value="RNA_pol_Rpb2_6"/>
    <property type="match status" value="1"/>
</dbReference>
<dbReference type="Pfam" id="PF04560">
    <property type="entry name" value="RNA_pol_Rpb2_7"/>
    <property type="match status" value="1"/>
</dbReference>
<dbReference type="SUPFAM" id="SSF64484">
    <property type="entry name" value="beta and beta-prime subunits of DNA dependent RNA-polymerase"/>
    <property type="match status" value="1"/>
</dbReference>
<dbReference type="PROSITE" id="PS01166">
    <property type="entry name" value="RNA_POL_BETA"/>
    <property type="match status" value="1"/>
</dbReference>